<name>ARC_MYCTU</name>
<dbReference type="EMBL" id="DQ888314">
    <property type="protein sequence ID" value="ABI36485.1"/>
    <property type="molecule type" value="Genomic_DNA"/>
</dbReference>
<dbReference type="EMBL" id="AL123456">
    <property type="protein sequence ID" value="CCP44890.1"/>
    <property type="molecule type" value="Genomic_DNA"/>
</dbReference>
<dbReference type="PIR" id="F70512">
    <property type="entry name" value="F70512"/>
</dbReference>
<dbReference type="RefSeq" id="NP_216631.1">
    <property type="nucleotide sequence ID" value="NC_000962.3"/>
</dbReference>
<dbReference type="PDB" id="3FP9">
    <property type="method" value="X-ray"/>
    <property type="resolution" value="2.00 A"/>
    <property type="chains" value="A/B/C/D/E/F/G/H/I/J/K/L=98-245"/>
</dbReference>
<dbReference type="PDB" id="3M91">
    <property type="method" value="X-ray"/>
    <property type="resolution" value="1.80 A"/>
    <property type="chains" value="A/C=46-96"/>
</dbReference>
<dbReference type="PDB" id="3M9B">
    <property type="method" value="X-ray"/>
    <property type="resolution" value="3.94 A"/>
    <property type="chains" value="A/B/C/D/E/F/G/H/I/J/K/L=1-234"/>
</dbReference>
<dbReference type="PDB" id="3M9D">
    <property type="method" value="X-ray"/>
    <property type="resolution" value="4.50 A"/>
    <property type="chains" value="A/B/C/D/E/F/J/K/L/M/N/O=1-234"/>
</dbReference>
<dbReference type="PDB" id="3M9H">
    <property type="method" value="X-ray"/>
    <property type="resolution" value="2.00 A"/>
    <property type="chains" value="A/B/C/D/E/F=46-96"/>
</dbReference>
<dbReference type="PDB" id="5KWA">
    <property type="method" value="X-ray"/>
    <property type="resolution" value="2.90 A"/>
    <property type="chains" value="A/B=95-602"/>
</dbReference>
<dbReference type="PDB" id="5KZF">
    <property type="method" value="X-ray"/>
    <property type="resolution" value="3.49 A"/>
    <property type="chains" value="A/B/C/D/E/F/G/H/I/J/K/L=98-609"/>
</dbReference>
<dbReference type="PDB" id="7LJF">
    <property type="method" value="EM"/>
    <property type="resolution" value="4.00 A"/>
    <property type="chains" value="A/B/C/D/E/F=1-601"/>
</dbReference>
<dbReference type="PDB" id="7PX9">
    <property type="method" value="EM"/>
    <property type="resolution" value="3.80 A"/>
    <property type="chains" value="A/B/C/D/E/F=1-609"/>
</dbReference>
<dbReference type="PDB" id="7PXA">
    <property type="method" value="EM"/>
    <property type="resolution" value="2.80 A"/>
    <property type="chains" value="1/A/B/C/D/E/F=1-609"/>
</dbReference>
<dbReference type="PDB" id="7PXB">
    <property type="method" value="EM"/>
    <property type="resolution" value="4.00 A"/>
    <property type="chains" value="A/B/C/D/E/F=1-609"/>
</dbReference>
<dbReference type="PDB" id="7PXC">
    <property type="method" value="EM"/>
    <property type="resolution" value="3.84 A"/>
    <property type="chains" value="1/A/B/C/D/E/F=1-609"/>
</dbReference>
<dbReference type="PDB" id="7PXD">
    <property type="method" value="EM"/>
    <property type="resolution" value="4.00 A"/>
    <property type="chains" value="1/A/B/C/D/E/F=1-609"/>
</dbReference>
<dbReference type="PDBsum" id="3FP9"/>
<dbReference type="PDBsum" id="3M91"/>
<dbReference type="PDBsum" id="3M9B"/>
<dbReference type="PDBsum" id="3M9D"/>
<dbReference type="PDBsum" id="3M9H"/>
<dbReference type="PDBsum" id="5KWA"/>
<dbReference type="PDBsum" id="5KZF"/>
<dbReference type="PDBsum" id="7LJF"/>
<dbReference type="PDBsum" id="7PX9"/>
<dbReference type="PDBsum" id="7PXA"/>
<dbReference type="PDBsum" id="7PXB"/>
<dbReference type="PDBsum" id="7PXC"/>
<dbReference type="PDBsum" id="7PXD"/>
<dbReference type="EMDB" id="EMD-13697"/>
<dbReference type="SMR" id="P9WQN5"/>
<dbReference type="FunCoup" id="P9WQN5">
    <property type="interactions" value="161"/>
</dbReference>
<dbReference type="IntAct" id="P9WQN5">
    <property type="interactions" value="1"/>
</dbReference>
<dbReference type="MINT" id="P9WQN5"/>
<dbReference type="STRING" id="83332.Rv2115c"/>
<dbReference type="PaxDb" id="83332-Rv2115c"/>
<dbReference type="DNASU" id="887297"/>
<dbReference type="GeneID" id="887297"/>
<dbReference type="KEGG" id="mtu:Rv2115c"/>
<dbReference type="KEGG" id="mtv:RVBD_2115c"/>
<dbReference type="TubercuList" id="Rv2115c"/>
<dbReference type="eggNOG" id="COG1222">
    <property type="taxonomic scope" value="Bacteria"/>
</dbReference>
<dbReference type="InParanoid" id="P9WQN5"/>
<dbReference type="OrthoDB" id="9809379at2"/>
<dbReference type="PhylomeDB" id="P9WQN5"/>
<dbReference type="BRENDA" id="5.6.1.5">
    <property type="organism ID" value="3445"/>
</dbReference>
<dbReference type="UniPathway" id="UPA00997"/>
<dbReference type="EvolutionaryTrace" id="P9WQN5"/>
<dbReference type="Proteomes" id="UP000001584">
    <property type="component" value="Chromosome"/>
</dbReference>
<dbReference type="GO" id="GO:0009274">
    <property type="term" value="C:peptidoglycan-based cell wall"/>
    <property type="evidence" value="ECO:0007005"/>
    <property type="project" value="MTBBASE"/>
</dbReference>
<dbReference type="GO" id="GO:0005886">
    <property type="term" value="C:plasma membrane"/>
    <property type="evidence" value="ECO:0007005"/>
    <property type="project" value="MTBBASE"/>
</dbReference>
<dbReference type="GO" id="GO:0022623">
    <property type="term" value="C:proteasome-activating nucleotidase complex"/>
    <property type="evidence" value="ECO:0000314"/>
    <property type="project" value="UniProtKB"/>
</dbReference>
<dbReference type="GO" id="GO:0005524">
    <property type="term" value="F:ATP binding"/>
    <property type="evidence" value="ECO:0007669"/>
    <property type="project" value="UniProtKB-UniRule"/>
</dbReference>
<dbReference type="GO" id="GO:0016887">
    <property type="term" value="F:ATP hydrolysis activity"/>
    <property type="evidence" value="ECO:0000318"/>
    <property type="project" value="GO_Central"/>
</dbReference>
<dbReference type="GO" id="GO:0004176">
    <property type="term" value="F:ATP-dependent peptidase activity"/>
    <property type="evidence" value="ECO:0000314"/>
    <property type="project" value="UniProtKB"/>
</dbReference>
<dbReference type="GO" id="GO:0042802">
    <property type="term" value="F:identical protein binding"/>
    <property type="evidence" value="ECO:0000353"/>
    <property type="project" value="IntAct"/>
</dbReference>
<dbReference type="GO" id="GO:0140035">
    <property type="term" value="F:ubiquitin-like protein reader activity"/>
    <property type="evidence" value="ECO:0000314"/>
    <property type="project" value="UniProtKB"/>
</dbReference>
<dbReference type="GO" id="GO:0071732">
    <property type="term" value="P:cellular response to nitric oxide"/>
    <property type="evidence" value="ECO:0000315"/>
    <property type="project" value="UniProtKB"/>
</dbReference>
<dbReference type="GO" id="GO:0019941">
    <property type="term" value="P:modification-dependent protein catabolic process"/>
    <property type="evidence" value="ECO:0000314"/>
    <property type="project" value="UniProtKB"/>
</dbReference>
<dbReference type="GO" id="GO:0010498">
    <property type="term" value="P:proteasomal protein catabolic process"/>
    <property type="evidence" value="ECO:0000314"/>
    <property type="project" value="UniProtKB"/>
</dbReference>
<dbReference type="GO" id="GO:0010499">
    <property type="term" value="P:proteasomal ubiquitin-independent protein catabolic process"/>
    <property type="evidence" value="ECO:0000314"/>
    <property type="project" value="MTBBASE"/>
</dbReference>
<dbReference type="GO" id="GO:0043335">
    <property type="term" value="P:protein unfolding"/>
    <property type="evidence" value="ECO:0000314"/>
    <property type="project" value="UniProtKB"/>
</dbReference>
<dbReference type="GO" id="GO:0051409">
    <property type="term" value="P:response to nitrosative stress"/>
    <property type="evidence" value="ECO:0000315"/>
    <property type="project" value="MTBBASE"/>
</dbReference>
<dbReference type="GO" id="GO:0052164">
    <property type="term" value="P:symbiont defense to host-produced reactive oxygen species"/>
    <property type="evidence" value="ECO:0000315"/>
    <property type="project" value="UniProtKB"/>
</dbReference>
<dbReference type="GO" id="GO:0030682">
    <property type="term" value="P:symbiont-mediated perturbation of host defenses"/>
    <property type="evidence" value="ECO:0000315"/>
    <property type="project" value="UniProtKB"/>
</dbReference>
<dbReference type="FunFam" id="1.10.8.60:FF:000122">
    <property type="entry name" value="AAA ATPase forming ring-shaped complexes"/>
    <property type="match status" value="1"/>
</dbReference>
<dbReference type="FunFam" id="1.20.5.170:FF:000018">
    <property type="entry name" value="AAA ATPase forming ring-shaped complexes"/>
    <property type="match status" value="1"/>
</dbReference>
<dbReference type="FunFam" id="2.40.50.140:FF:000169">
    <property type="entry name" value="AAA ATPase forming ring-shaped complexes"/>
    <property type="match status" value="1"/>
</dbReference>
<dbReference type="FunFam" id="3.40.50.300:FF:000155">
    <property type="entry name" value="AAA ATPase forming ring-shaped complexes"/>
    <property type="match status" value="1"/>
</dbReference>
<dbReference type="Gene3D" id="1.10.8.60">
    <property type="match status" value="1"/>
</dbReference>
<dbReference type="Gene3D" id="1.20.5.170">
    <property type="match status" value="1"/>
</dbReference>
<dbReference type="Gene3D" id="2.40.50.140">
    <property type="entry name" value="Nucleic acid-binding proteins"/>
    <property type="match status" value="2"/>
</dbReference>
<dbReference type="Gene3D" id="3.40.50.300">
    <property type="entry name" value="P-loop containing nucleotide triphosphate hydrolases"/>
    <property type="match status" value="1"/>
</dbReference>
<dbReference type="HAMAP" id="MF_02112">
    <property type="entry name" value="ARC_ATPase"/>
    <property type="match status" value="1"/>
</dbReference>
<dbReference type="InterPro" id="IPR003593">
    <property type="entry name" value="AAA+_ATPase"/>
</dbReference>
<dbReference type="InterPro" id="IPR050168">
    <property type="entry name" value="AAA_ATPase_domain"/>
</dbReference>
<dbReference type="InterPro" id="IPR003959">
    <property type="entry name" value="ATPase_AAA_core"/>
</dbReference>
<dbReference type="InterPro" id="IPR003960">
    <property type="entry name" value="ATPase_AAA_CS"/>
</dbReference>
<dbReference type="InterPro" id="IPR012340">
    <property type="entry name" value="NA-bd_OB-fold"/>
</dbReference>
<dbReference type="InterPro" id="IPR027417">
    <property type="entry name" value="P-loop_NTPase"/>
</dbReference>
<dbReference type="InterPro" id="IPR032501">
    <property type="entry name" value="Prot_ATP_ID_OB_2nd"/>
</dbReference>
<dbReference type="InterPro" id="IPR041626">
    <property type="entry name" value="Prot_ATP_ID_OB_N"/>
</dbReference>
<dbReference type="InterPro" id="IPR022482">
    <property type="entry name" value="Proteasome_ATPase"/>
</dbReference>
<dbReference type="NCBIfam" id="TIGR03689">
    <property type="entry name" value="pup_AAA"/>
    <property type="match status" value="1"/>
</dbReference>
<dbReference type="PANTHER" id="PTHR23077">
    <property type="entry name" value="AAA-FAMILY ATPASE"/>
    <property type="match status" value="1"/>
</dbReference>
<dbReference type="PANTHER" id="PTHR23077:SF144">
    <property type="entry name" value="PROTEASOME-ASSOCIATED ATPASE"/>
    <property type="match status" value="1"/>
</dbReference>
<dbReference type="Pfam" id="PF00004">
    <property type="entry name" value="AAA"/>
    <property type="match status" value="1"/>
</dbReference>
<dbReference type="Pfam" id="PF16450">
    <property type="entry name" value="Prot_ATP_ID_OB_C"/>
    <property type="match status" value="1"/>
</dbReference>
<dbReference type="Pfam" id="PF17758">
    <property type="entry name" value="Prot_ATP_ID_OB_N"/>
    <property type="match status" value="1"/>
</dbReference>
<dbReference type="SMART" id="SM00382">
    <property type="entry name" value="AAA"/>
    <property type="match status" value="1"/>
</dbReference>
<dbReference type="SUPFAM" id="SSF52540">
    <property type="entry name" value="P-loop containing nucleoside triphosphate hydrolases"/>
    <property type="match status" value="1"/>
</dbReference>
<dbReference type="PROSITE" id="PS00674">
    <property type="entry name" value="AAA"/>
    <property type="match status" value="1"/>
</dbReference>
<feature type="chain" id="PRO_0000084778" description="Proteasome-associated ATPase">
    <location>
        <begin position="1"/>
        <end position="609"/>
    </location>
</feature>
<feature type="region of interest" description="Disordered" evidence="2">
    <location>
        <begin position="1"/>
        <end position="24"/>
    </location>
</feature>
<feature type="region of interest" description="Docks into pockets in the proteasome alpha-ring" evidence="1">
    <location>
        <begin position="608"/>
        <end position="609"/>
    </location>
</feature>
<feature type="coiled-coil region" evidence="1">
    <location>
        <begin position="20"/>
        <end position="96"/>
    </location>
</feature>
<feature type="binding site" evidence="1">
    <location>
        <begin position="296"/>
        <end position="301"/>
    </location>
    <ligand>
        <name>ATP</name>
        <dbReference type="ChEBI" id="CHEBI:30616"/>
    </ligand>
</feature>
<feature type="cross-link" description="Isoglutamyl lysine isopeptide (Lys-Gln) (interchain with Q-Cter in protein Pup)" evidence="13">
    <location>
        <position position="591"/>
    </location>
</feature>
<feature type="mutagenesis site" description="Does not dramatically affect proteasome substrate degradation." evidence="12">
    <original>R</original>
    <variation>A</variation>
    <location>
        <position position="120"/>
    </location>
</feature>
<feature type="mutagenesis site" description="Impairs Mpa hexamerization; when associated with A-187 and E-235." evidence="12">
    <original>R</original>
    <variation>E</variation>
    <location>
        <position position="173"/>
    </location>
</feature>
<feature type="mutagenesis site" description="Impairs Mpa hexamerization; when associated with E-173 and E-235." evidence="12">
    <original>W</original>
    <variation>A</variation>
    <location>
        <position position="187"/>
    </location>
</feature>
<feature type="mutagenesis site" description="Does not dramatically affect proteasome substrate degradation." evidence="12">
    <original>K</original>
    <variation>A</variation>
    <location>
        <position position="225"/>
    </location>
</feature>
<feature type="mutagenesis site" description="Impairs Mpa hexamerization; when associated with E-173 and A-187." evidence="12">
    <original>K</original>
    <variation>E</variation>
    <location>
        <position position="235"/>
    </location>
</feature>
<feature type="mutagenesis site" description="Reduces both ATPase activity and ATP affinity. Abolishes proteasome substrate degradation and protection against RNI." evidence="5 12">
    <original>K</original>
    <variation>Q</variation>
    <location>
        <position position="299"/>
    </location>
</feature>
<feature type="mutagenesis site" description="Abolishes unfolding capacity." evidence="14">
    <original>F</original>
    <variation>A</variation>
    <location>
        <position position="341"/>
    </location>
</feature>
<feature type="mutagenesis site" description="No effect on unfolding capacity." evidence="14">
    <original>F</original>
    <variation>Y</variation>
    <location>
        <position position="341"/>
    </location>
</feature>
<feature type="mutagenesis site" description="Abolishes proteasome substrate degradation." evidence="12">
    <original>V</original>
    <variation>A</variation>
    <location>
        <position position="342"/>
    </location>
</feature>
<feature type="mutagenesis site" description="Severely reduces ATPase activity. Abolishes proteasome substrate degradation and protection against RNI." evidence="5 12">
    <original>D</original>
    <variation>A</variation>
    <location>
        <position position="371"/>
    </location>
</feature>
<feature type="mutagenesis site" description="Severely reduces ATPase activity. Abolishes protection against RNI." evidence="5">
    <original>E</original>
    <variation>A</variation>
    <location>
        <position position="372"/>
    </location>
</feature>
<feature type="mutagenesis site" description="Abolishes protection against RNI." evidence="5">
    <original>E</original>
    <variation>Q</variation>
    <location>
        <position position="372"/>
    </location>
</feature>
<feature type="mutagenesis site" description="Retains ATPase and unfolding activities, yet abolishes proteasome substrate degradation and protection against RNI. Is also highly attenuated in mice." evidence="5 6 14">
    <location>
        <begin position="608"/>
        <end position="609"/>
    </location>
</feature>
<feature type="mutagenesis site" description="Abolishes proteasome substrate degradation and protection against RNI." evidence="6 12">
    <original>Y</original>
    <variation>E</variation>
    <variation>F</variation>
    <location>
        <position position="608"/>
    </location>
</feature>
<feature type="helix" evidence="16">
    <location>
        <begin position="53"/>
        <end position="94"/>
    </location>
</feature>
<feature type="strand" evidence="15">
    <location>
        <begin position="99"/>
        <end position="107"/>
    </location>
</feature>
<feature type="strand" evidence="15">
    <location>
        <begin position="109"/>
        <end position="117"/>
    </location>
</feature>
<feature type="strand" evidence="15">
    <location>
        <begin position="120"/>
        <end position="126"/>
    </location>
</feature>
<feature type="helix" evidence="17">
    <location>
        <begin position="132"/>
        <end position="134"/>
    </location>
</feature>
<feature type="strand" evidence="15">
    <location>
        <begin position="140"/>
        <end position="143"/>
    </location>
</feature>
<feature type="strand" evidence="15">
    <location>
        <begin position="149"/>
        <end position="152"/>
    </location>
</feature>
<feature type="strand" evidence="15">
    <location>
        <begin position="158"/>
        <end position="167"/>
    </location>
</feature>
<feature type="strand" evidence="15">
    <location>
        <begin position="171"/>
        <end position="177"/>
    </location>
</feature>
<feature type="strand" evidence="15">
    <location>
        <begin position="183"/>
        <end position="188"/>
    </location>
</feature>
<feature type="helix" evidence="15">
    <location>
        <begin position="190"/>
        <end position="193"/>
    </location>
</feature>
<feature type="helix" evidence="15">
    <location>
        <begin position="203"/>
        <end position="205"/>
    </location>
</feature>
<feature type="strand" evidence="15">
    <location>
        <begin position="219"/>
        <end position="223"/>
    </location>
</feature>
<feature type="turn" evidence="15">
    <location>
        <begin position="224"/>
        <end position="227"/>
    </location>
</feature>
<feature type="strand" evidence="15">
    <location>
        <begin position="228"/>
        <end position="233"/>
    </location>
</feature>
<feature type="helix" evidence="15">
    <location>
        <begin position="238"/>
        <end position="245"/>
    </location>
</feature>
<feature type="turn" evidence="17">
    <location>
        <begin position="251"/>
        <end position="253"/>
    </location>
</feature>
<feature type="helix" evidence="17">
    <location>
        <begin position="258"/>
        <end position="268"/>
    </location>
</feature>
<feature type="helix" evidence="17">
    <location>
        <begin position="270"/>
        <end position="273"/>
    </location>
</feature>
<feature type="helix" evidence="17">
    <location>
        <begin position="275"/>
        <end position="280"/>
    </location>
</feature>
<feature type="strand" evidence="17">
    <location>
        <begin position="288"/>
        <end position="294"/>
    </location>
</feature>
<feature type="helix" evidence="17">
    <location>
        <begin position="299"/>
        <end position="312"/>
    </location>
</feature>
<feature type="strand" evidence="17">
    <location>
        <begin position="328"/>
        <end position="333"/>
    </location>
</feature>
<feature type="helix" evidence="17">
    <location>
        <begin position="334"/>
        <end position="338"/>
    </location>
</feature>
<feature type="helix" evidence="17">
    <location>
        <begin position="345"/>
        <end position="360"/>
    </location>
</feature>
<feature type="turn" evidence="17">
    <location>
        <begin position="361"/>
        <end position="363"/>
    </location>
</feature>
<feature type="strand" evidence="17">
    <location>
        <begin position="366"/>
        <end position="371"/>
    </location>
</feature>
<feature type="helix" evidence="17">
    <location>
        <begin position="393"/>
        <end position="403"/>
    </location>
</feature>
<feature type="strand" evidence="17">
    <location>
        <begin position="409"/>
        <end position="416"/>
    </location>
</feature>
<feature type="helix" evidence="17">
    <location>
        <begin position="418"/>
        <end position="420"/>
    </location>
</feature>
<feature type="helix" evidence="17">
    <location>
        <begin position="423"/>
        <end position="426"/>
    </location>
</feature>
<feature type="strand" evidence="17">
    <location>
        <begin position="433"/>
        <end position="436"/>
    </location>
</feature>
<feature type="helix" evidence="17">
    <location>
        <begin position="442"/>
        <end position="449"/>
    </location>
</feature>
<feature type="turn" evidence="17">
    <location>
        <begin position="450"/>
        <end position="452"/>
    </location>
</feature>
<feature type="helix" evidence="17">
    <location>
        <begin position="461"/>
        <end position="465"/>
    </location>
</feature>
<feature type="turn" evidence="17">
    <location>
        <begin position="466"/>
        <end position="469"/>
    </location>
</feature>
<feature type="helix" evidence="17">
    <location>
        <begin position="471"/>
        <end position="486"/>
    </location>
</feature>
<feature type="helix" evidence="17">
    <location>
        <begin position="491"/>
        <end position="493"/>
    </location>
</feature>
<feature type="strand" evidence="17">
    <location>
        <begin position="494"/>
        <end position="500"/>
    </location>
</feature>
<feature type="strand" evidence="17">
    <location>
        <begin position="505"/>
        <end position="509"/>
    </location>
</feature>
<feature type="helix" evidence="17">
    <location>
        <begin position="510"/>
        <end position="513"/>
    </location>
</feature>
<feature type="helix" evidence="17">
    <location>
        <begin position="516"/>
        <end position="537"/>
    </location>
</feature>
<feature type="helix" evidence="17">
    <location>
        <begin position="544"/>
        <end position="559"/>
    </location>
</feature>
<feature type="helix" evidence="17">
    <location>
        <begin position="567"/>
        <end position="577"/>
    </location>
</feature>
<feature type="strand" evidence="17">
    <location>
        <begin position="581"/>
        <end position="586"/>
    </location>
</feature>
<feature type="strand" evidence="17">
    <location>
        <begin position="597"/>
        <end position="599"/>
    </location>
</feature>
<proteinExistence type="evidence at protein level"/>
<organism>
    <name type="scientific">Mycobacterium tuberculosis (strain ATCC 25618 / H37Rv)</name>
    <dbReference type="NCBI Taxonomy" id="83332"/>
    <lineage>
        <taxon>Bacteria</taxon>
        <taxon>Bacillati</taxon>
        <taxon>Actinomycetota</taxon>
        <taxon>Actinomycetes</taxon>
        <taxon>Mycobacteriales</taxon>
        <taxon>Mycobacteriaceae</taxon>
        <taxon>Mycobacterium</taxon>
        <taxon>Mycobacterium tuberculosis complex</taxon>
    </lineage>
</organism>
<protein>
    <recommendedName>
        <fullName evidence="1">Proteasome-associated ATPase</fullName>
    </recommendedName>
    <alternativeName>
        <fullName evidence="1">AAA ATPase forming ring-shaped complexes</fullName>
        <shortName evidence="1">ARC</shortName>
    </alternativeName>
    <alternativeName>
        <fullName evidence="1">Mycobacterial proteasome ATPase</fullName>
    </alternativeName>
</protein>
<evidence type="ECO:0000255" key="1">
    <source>
        <dbReference type="HAMAP-Rule" id="MF_02112"/>
    </source>
</evidence>
<evidence type="ECO:0000256" key="2">
    <source>
        <dbReference type="SAM" id="MobiDB-lite"/>
    </source>
</evidence>
<evidence type="ECO:0000269" key="3">
    <source>
    </source>
</evidence>
<evidence type="ECO:0000269" key="4">
    <source>
    </source>
</evidence>
<evidence type="ECO:0000269" key="5">
    <source>
    </source>
</evidence>
<evidence type="ECO:0000269" key="6">
    <source>
    </source>
</evidence>
<evidence type="ECO:0000269" key="7">
    <source>
    </source>
</evidence>
<evidence type="ECO:0000269" key="8">
    <source>
    </source>
</evidence>
<evidence type="ECO:0000269" key="9">
    <source>
    </source>
</evidence>
<evidence type="ECO:0000269" key="10">
    <source>
    </source>
</evidence>
<evidence type="ECO:0000269" key="11">
    <source>
    </source>
</evidence>
<evidence type="ECO:0000269" key="12">
    <source>
    </source>
</evidence>
<evidence type="ECO:0000269" key="13">
    <source>
    </source>
</evidence>
<evidence type="ECO:0000269" key="14">
    <source>
    </source>
</evidence>
<evidence type="ECO:0007829" key="15">
    <source>
        <dbReference type="PDB" id="3FP9"/>
    </source>
</evidence>
<evidence type="ECO:0007829" key="16">
    <source>
        <dbReference type="PDB" id="3M91"/>
    </source>
</evidence>
<evidence type="ECO:0007829" key="17">
    <source>
        <dbReference type="PDB" id="5KWA"/>
    </source>
</evidence>
<reference key="1">
    <citation type="journal article" date="2005" name="Mol. Microbiol.">
        <title>Characterization of a Mycobacterium tuberculosis proteasomal ATPase homologue.</title>
        <authorList>
            <person name="Darwin K.H."/>
            <person name="Lin G."/>
            <person name="Chen Z."/>
            <person name="Li H."/>
            <person name="Nathan C.F."/>
        </authorList>
    </citation>
    <scope>NUCLEOTIDE SEQUENCE [GENOMIC DNA]</scope>
    <scope>FUNCTION AS AN ATPASE</scope>
    <scope>BIOPHYSICOCHEMICAL PROPERTIES</scope>
    <scope>ACTIVITY REGULATION</scope>
    <scope>SUBUNIT</scope>
    <scope>MUTAGENESIS OF LYS-299; ASP-371; GLU-372 AND 608-TYR-GLU-609</scope>
    <source>
        <strain>ATCC 25618 / H37Rv</strain>
    </source>
</reference>
<reference key="2">
    <citation type="journal article" date="1998" name="Nature">
        <title>Deciphering the biology of Mycobacterium tuberculosis from the complete genome sequence.</title>
        <authorList>
            <person name="Cole S.T."/>
            <person name="Brosch R."/>
            <person name="Parkhill J."/>
            <person name="Garnier T."/>
            <person name="Churcher C.M."/>
            <person name="Harris D.E."/>
            <person name="Gordon S.V."/>
            <person name="Eiglmeier K."/>
            <person name="Gas S."/>
            <person name="Barry C.E. III"/>
            <person name="Tekaia F."/>
            <person name="Badcock K."/>
            <person name="Basham D."/>
            <person name="Brown D."/>
            <person name="Chillingworth T."/>
            <person name="Connor R."/>
            <person name="Davies R.M."/>
            <person name="Devlin K."/>
            <person name="Feltwell T."/>
            <person name="Gentles S."/>
            <person name="Hamlin N."/>
            <person name="Holroyd S."/>
            <person name="Hornsby T."/>
            <person name="Jagels K."/>
            <person name="Krogh A."/>
            <person name="McLean J."/>
            <person name="Moule S."/>
            <person name="Murphy L.D."/>
            <person name="Oliver S."/>
            <person name="Osborne J."/>
            <person name="Quail M.A."/>
            <person name="Rajandream M.A."/>
            <person name="Rogers J."/>
            <person name="Rutter S."/>
            <person name="Seeger K."/>
            <person name="Skelton S."/>
            <person name="Squares S."/>
            <person name="Squares R."/>
            <person name="Sulston J.E."/>
            <person name="Taylor K."/>
            <person name="Whitehead S."/>
            <person name="Barrell B.G."/>
        </authorList>
    </citation>
    <scope>NUCLEOTIDE SEQUENCE [LARGE SCALE GENOMIC DNA]</scope>
    <source>
        <strain>ATCC 25618 / H37Rv</strain>
    </source>
</reference>
<reference key="3">
    <citation type="journal article" date="2003" name="Science">
        <title>The proteasome of Mycobacterium tuberculosis is required for resistance to nitric oxide.</title>
        <authorList>
            <person name="Darwin K.H."/>
            <person name="Ehrt S."/>
            <person name="Gutierrez-Ramos J.-C."/>
            <person name="Weich N."/>
            <person name="Nathan C.F."/>
        </authorList>
    </citation>
    <scope>GENE NAME</scope>
    <scope>ROLE IN RESISTANCE TO RNI</scope>
    <scope>DISRUPTION PHENOTYPE</scope>
    <source>
        <strain>ATCC 25618 / H37Rv</strain>
    </source>
</reference>
<reference key="4">
    <citation type="journal article" date="2005" name="Proc. Natl. Acad. Sci. U.S.A.">
        <title>S-nitroso proteome of Mycobacterium tuberculosis: enzymes of intermediary metabolism and antioxidant defense.</title>
        <authorList>
            <person name="Rhee K.Y."/>
            <person name="Erdjument-Bromage H."/>
            <person name="Tempst P."/>
            <person name="Nathan C.F."/>
        </authorList>
    </citation>
    <scope>TARGET OF RNI</scope>
    <scope>S-NITROSYLATION</scope>
    <source>
        <strain>ATCC 25618 / H37Rv</strain>
    </source>
</reference>
<reference key="5">
    <citation type="journal article" date="2006" name="EMBO J.">
        <title>Identification of substrates of the Mycobacterium tuberculosis proteasome.</title>
        <authorList>
            <person name="Pearce M.J."/>
            <person name="Arora P."/>
            <person name="Festa R.A."/>
            <person name="Butler-Wu S.M."/>
            <person name="Gokhale R.S."/>
            <person name="Darwin K.H."/>
        </authorList>
    </citation>
    <scope>FUNCTION IN THE PROTEASOME DEGRADATION PATHWAY</scope>
    <scope>REGULATION OF MPA LEVELS</scope>
    <scope>PROTEASOME SUBSTRATE</scope>
    <scope>MUTAGENESIS OF TYR-608 AND 608-TYR-GLU-609</scope>
    <source>
        <strain>ATCC 25618 / H37Rv</strain>
    </source>
</reference>
<reference key="6">
    <citation type="journal article" date="2008" name="Science">
        <title>Ubiquitin-like protein involved in the proteasome pathway of Mycobacterium tuberculosis.</title>
        <authorList>
            <person name="Pearce M.J."/>
            <person name="Mintseris J."/>
            <person name="Ferreyra J."/>
            <person name="Gygi S.P."/>
            <person name="Darwin K.H."/>
        </authorList>
    </citation>
    <scope>INTERACTION WITH PUP</scope>
    <scope>DISRUPTION PHENOTYPE</scope>
    <source>
        <strain>ATCC 25618 / H37Rv</strain>
    </source>
</reference>
<reference key="7">
    <citation type="journal article" date="2009" name="Biochem. J.">
        <title>Pup, a prokaryotic ubiquitin-like protein, is an intrinsically disordered protein.</title>
        <authorList>
            <person name="Liao S."/>
            <person name="Shang Q."/>
            <person name="Zhang X."/>
            <person name="Zhang J."/>
            <person name="Xu C."/>
            <person name="Tu X."/>
        </authorList>
    </citation>
    <scope>INTERACTION WITH PUP</scope>
</reference>
<reference key="8">
    <citation type="journal article" date="2009" name="FEBS Lett.">
        <title>A distinct structural region of the prokaryotic ubiquitin-like protein (Pup) is recognized by the N-terminal domain of the proteasomal ATPase Mpa.</title>
        <authorList>
            <person name="Sutter M."/>
            <person name="Striebel F."/>
            <person name="Damberger F.F."/>
            <person name="Allain F.H."/>
            <person name="Weber-Ban E."/>
        </authorList>
    </citation>
    <scope>INTERACTION WITH PUP</scope>
    <scope>STOICHIOMETRY OF THE PUP-MPA COMPLEX</scope>
    <scope>DOMAIN</scope>
    <source>
        <strain>ATCC 25618 / H37Rv</strain>
    </source>
</reference>
<reference key="9">
    <citation type="journal article" date="2009" name="J. Mol. Biol.">
        <title>Prokaryotic ubiquitin-like protein Pup is intrinsically disordered.</title>
        <authorList>
            <person name="Chen X."/>
            <person name="Solomon W.C."/>
            <person name="Kang Y."/>
            <person name="Cerda-Maira F."/>
            <person name="Darwin K.H."/>
            <person name="Walters K.J."/>
        </authorList>
    </citation>
    <scope>INTERACTION WITH PUP</scope>
    <scope>STOICHIOMETRY OF THE PUP-MPA COMPLEX</scope>
</reference>
<reference key="10">
    <citation type="journal article" date="2009" name="Nat. Struct. Mol. Biol.">
        <title>Bacterial ubiquitin-like modifier Pup is deamidated and conjugated to substrates by distinct but homologous enzymes.</title>
        <authorList>
            <person name="Striebel F."/>
            <person name="Imkamp F."/>
            <person name="Sutter M."/>
            <person name="Steiner M."/>
            <person name="Mamedov A."/>
            <person name="Weber-Ban E."/>
        </authorList>
    </citation>
    <scope>INTERACTION WITH PUP</scope>
    <scope>IDENTIFICATION BY MASS SPECTROMETRY</scope>
    <source>
        <strain>ATCC 25618 / H37Rv</strain>
    </source>
</reference>
<reference key="11">
    <citation type="journal article" date="2010" name="EMBO J.">
        <title>The mycobacterial Mpa-proteasome unfolds and degrades pupylated substrates by engaging Pup's N-terminus.</title>
        <authorList>
            <person name="Striebel F."/>
            <person name="Hunkeler M."/>
            <person name="Summer H."/>
            <person name="Weber-Ban E."/>
        </authorList>
    </citation>
    <scope>FUNCTION AS UNFOLDASE AND TRANSLOCASE</scope>
    <scope>DOMAIN</scope>
    <scope>MUTAGENESIS OF PHE-341 AND 608-TYR-GLU-609</scope>
    <scope>RECONSTITUTION OF THE PROTEASOME DEGRADATION PATHWAY</scope>
    <source>
        <strain>ATCC 25618 / H37Rv</strain>
    </source>
</reference>
<reference key="12">
    <citation type="journal article" date="2010" name="PLoS ONE">
        <title>Prokaryotic ubiquitin-like protein (Pup) proteome of Mycobacterium tuberculosis.</title>
        <authorList>
            <person name="Festa R.A."/>
            <person name="McAllister F."/>
            <person name="Pearce M.J."/>
            <person name="Mintseris J."/>
            <person name="Burns K.E."/>
            <person name="Gygi S.P."/>
            <person name="Darwin K.H."/>
        </authorList>
    </citation>
    <scope>PUPYLATION AT LYS-591</scope>
    <scope>IDENTIFICATION BY MASS SPECTROMETRY</scope>
    <source>
        <strain>ATCC 25618 / H37Rv</strain>
    </source>
</reference>
<reference key="13">
    <citation type="journal article" date="2011" name="Mol. Cell. Proteomics">
        <title>Proteogenomic analysis of Mycobacterium tuberculosis by high resolution mass spectrometry.</title>
        <authorList>
            <person name="Kelkar D.S."/>
            <person name="Kumar D."/>
            <person name="Kumar P."/>
            <person name="Balakrishnan L."/>
            <person name="Muthusamy B."/>
            <person name="Yadav A.K."/>
            <person name="Shrivastava P."/>
            <person name="Marimuthu A."/>
            <person name="Anand S."/>
            <person name="Sundaram H."/>
            <person name="Kingsbury R."/>
            <person name="Harsha H.C."/>
            <person name="Nair B."/>
            <person name="Prasad T.S."/>
            <person name="Chauhan D.S."/>
            <person name="Katoch K."/>
            <person name="Katoch V.M."/>
            <person name="Kumar P."/>
            <person name="Chaerkady R."/>
            <person name="Ramachandran S."/>
            <person name="Dash D."/>
            <person name="Pandey A."/>
        </authorList>
    </citation>
    <scope>IDENTIFICATION BY MASS SPECTROMETRY [LARGE SCALE ANALYSIS]</scope>
    <source>
        <strain>ATCC 25618 / H37Rv</strain>
    </source>
</reference>
<reference key="14">
    <citation type="journal article" date="2009" name="Structure">
        <title>Structural insights on the Mycobacterium tuberculosis proteasomal ATPase Mpa.</title>
        <authorList>
            <person name="Wang T."/>
            <person name="Li H."/>
            <person name="Lin G."/>
            <person name="Tang C."/>
            <person name="Li D."/>
            <person name="Nathan C."/>
            <person name="Darwin K.H."/>
            <person name="Li H."/>
        </authorList>
    </citation>
    <scope>X-RAY CRYSTALLOGRAPHY (2.0 ANGSTROMS) OF 98-245</scope>
    <scope>FUNCTION</scope>
    <scope>INTERACTION WITH PROTEASOME</scope>
    <scope>DOMAIN</scope>
    <scope>MUTAGENESIS OF ARG-120; ARG-173; TRP-187; LYS-225; LYS-235; LYS-299; VAL-342; ASP-371 AND TYR-608</scope>
    <source>
        <strain>ATCC 25618 / H37Rv</strain>
    </source>
</reference>
<sequence length="609" mass="67401">MGESERSEAFGIPRDSPLSSGDAAELEQLRREAAVLREQLENAVGSHAPTRSARDIHQLEARIDSLAARNSKLMETLKEARQQLLALREEVDRLGQPPSGYGVLLATHDDDTVDVFTSGRKMRLTCSPNIDAASLKKGQTVRLNEALTVVEAGTFEAVGEISTLREILADGHRALVVGHADEERVVWLADPLIAEDLPDGLPEALNDDTRPRKLRPGDSLLVDTKAGYAFERIPKAEVEDLVLEEVPDVSYADIGGLSRQIEQIRDAVELPFLHKELYREYSLRPPKGVLLYGPPGCGKTLIAKAVANSLAKKMAEVRGDDAHEAKSYFLNIKGPELLNKFVGETERHIRLIFQRAREKASEGTPVIVFFDEMDSIFRTRGTGVSSDVETTVVPQLLSEIDGVEGLENVIVIGASNREDMIDPAILRPGRLDVKIKIERPDAEAAQDIYSKYLTEFLPVHADDLAEFDGDRSACIKAMIEKVVDRMYAEIDDNRFLEVTYANGDKEVMYFKDFNSGAMIQNVVDRAKKNAIKSVLETGQPGLRIQHLLDSIVDEFAENEDLPNTTNPDDWARISGKKGERIVYIRTLVTGKSSSASRAIDTESNLGQYL</sequence>
<comment type="function">
    <text evidence="1 3 5 6 12 14">ATPase which is responsible for recognizing, binding, unfolding and translocation of pupylated proteins into the bacterial 20S proteasome core particle. May be essential for opening the gate of the 20S proteasome via an interaction with its C-terminus, thereby allowing substrate entry and access to the site of proteolysis. Thus, the C-termini of the proteasomal ATPase may function like a 'key in a lock' to induce gate opening and therefore regulate proteolysis. Is required but not sufficient to confer resistance against the lethal effects of reactive nitrogen intermediates (RNI), antimicrobial molecules produced by activated macrophages and other cell types.</text>
</comment>
<comment type="activity regulation">
    <text evidence="5">ATPase activity is inhibited by EDTA, N-ethylmaleimide (NEM) and sodium azide.</text>
</comment>
<comment type="biophysicochemical properties">
    <kinetics>
        <KM evidence="5">330 uM for ATP</KM>
        <Vmax evidence="5">62.0 pmol/min/ug enzyme</Vmax>
    </kinetics>
    <phDependence>
        <text evidence="5">Optimum pH is 7.4-7.5.</text>
    </phDependence>
</comment>
<comment type="pathway">
    <text evidence="1">Protein degradation; proteasomal Pup-dependent pathway.</text>
</comment>
<comment type="subunit">
    <text evidence="1 5 7 8 9 10 11 12">Homohexamer. Assembles into a hexameric ring structure that caps the 20S proteasome core. Strongly interacts with the prokaryotic ubiquitin-like protein Pup through a hydrophobic interface; the interacting region of Mpa lies in its N-terminal coiled-coil domain. There is one Pup binding site per Mpa hexamer ring; the K(D) measured is about 3.8 uM. Upon ATP-binding, the C-terminus of Mpa interacts with the alpha-rings of the proteasome core, possibly by binding to the intersubunit pockets.</text>
</comment>
<comment type="interaction">
    <interactant intactId="EBI-7241067">
        <id>P9WQN5</id>
    </interactant>
    <interactant intactId="EBI-7241067">
        <id>P9WQN5</id>
        <label>mpa</label>
    </interactant>
    <organismsDiffer>false</organismsDiffer>
    <experiments>5</experiments>
</comment>
<comment type="interaction">
    <interactant intactId="EBI-7241067">
        <id>P9WQN5</id>
    </interactant>
    <interactant intactId="EBI-7241023">
        <id>P9WHN5</id>
        <label>pup</label>
    </interactant>
    <organismsDiffer>false</organismsDiffer>
    <experiments>6</experiments>
</comment>
<comment type="domain">
    <text evidence="11 12 14">Consists of three main regions, an N-terminal coiled-coil domain (residues 1-96) that binds to protein Pup and functions as a docking station, an interdomain (residues 97-245) involved in Mpa hexamerization, and a C-terminal ATPase domain of the AAA type (residues 246-609).</text>
</comment>
<comment type="PTM">
    <text evidence="13">Pupylated at Lys-591 by the prokaryotic ubiquitin-like protein Pup, which leads to its degradation by the proteasome. Mpa thus promotes its own turnover.</text>
</comment>
<comment type="PTM">
    <text evidence="4">Mpa is a target of RNI, thereby is S-nitrosylated in the phagosome of immunologically activated host macrophages, which causes enzyme inhibition.</text>
</comment>
<comment type="disruption phenotype">
    <text evidence="3 7">Cells lacking this gene accumulate pupylated proteins. These cells also become hypersensitive to reactive nitrogen intermediates (RNI) and are severely attenuated in both wild-type and nitric oxide synthase 2 deficient mice. Moreover, they display increased resistance to hydrogen peroxide.</text>
</comment>
<comment type="miscellaneous">
    <text>Was identified as a natural substrate of the M.tuberculosis proteasome.</text>
</comment>
<comment type="similarity">
    <text evidence="1">Belongs to the AAA ATPase family.</text>
</comment>
<gene>
    <name evidence="1" type="primary">mpa</name>
    <name type="ordered locus">Rv2115c</name>
    <name type="ORF">MTCY261.11c</name>
</gene>
<keyword id="KW-0002">3D-structure</keyword>
<keyword id="KW-0067">ATP-binding</keyword>
<keyword id="KW-0143">Chaperone</keyword>
<keyword id="KW-0175">Coiled coil</keyword>
<keyword id="KW-1017">Isopeptide bond</keyword>
<keyword id="KW-0547">Nucleotide-binding</keyword>
<keyword id="KW-0647">Proteasome</keyword>
<keyword id="KW-1185">Reference proteome</keyword>
<keyword id="KW-0702">S-nitrosylation</keyword>
<keyword id="KW-0832">Ubl conjugation</keyword>
<keyword id="KW-0843">Virulence</keyword>
<accession>P9WQN5</accession>
<accession>L0T8W3</accession>
<accession>O33250</accession>
<accession>P63345</accession>
<accession>Q0G9Y7</accession>